<organism>
    <name type="scientific">Haemophilus influenzae (strain ATCC 51907 / DSM 11121 / KW20 / Rd)</name>
    <dbReference type="NCBI Taxonomy" id="71421"/>
    <lineage>
        <taxon>Bacteria</taxon>
        <taxon>Pseudomonadati</taxon>
        <taxon>Pseudomonadota</taxon>
        <taxon>Gammaproteobacteria</taxon>
        <taxon>Pasteurellales</taxon>
        <taxon>Pasteurellaceae</taxon>
        <taxon>Haemophilus</taxon>
    </lineage>
</organism>
<evidence type="ECO:0000255" key="1"/>
<evidence type="ECO:0000305" key="2"/>
<sequence>MKSHVRSFKTYIRDEIIKKGGWVNAHAHADRAFTMTPEKIGIYHSSNLQQKWDLVDEVKRTSSVDDYYARFCQSIELMISQGVTAFGTFVDIDPICEDRAIIAAHKAREVYKHDIILKFANQTLKGVIEPTARKWFDIGAEMVDMIGGLPYRDELDYGRGLEAMDILLDKAKSLGIMCHVHVDQFNNPSEKETEQLCDKTIEHGMEGRVVGIHGISIGSHSKEYRYKLYEKMRKAKMMMIACPMAWIDSNRKEDLMPFHNALTPADEMIPEVSLLP</sequence>
<proteinExistence type="inferred from homology"/>
<reference key="1">
    <citation type="journal article" date="1995" name="Science">
        <title>Whole-genome random sequencing and assembly of Haemophilus influenzae Rd.</title>
        <authorList>
            <person name="Fleischmann R.D."/>
            <person name="Adams M.D."/>
            <person name="White O."/>
            <person name="Clayton R.A."/>
            <person name="Kirkness E.F."/>
            <person name="Kerlavage A.R."/>
            <person name="Bult C.J."/>
            <person name="Tomb J.-F."/>
            <person name="Dougherty B.A."/>
            <person name="Merrick J.M."/>
            <person name="McKenney K."/>
            <person name="Sutton G.G."/>
            <person name="FitzHugh W."/>
            <person name="Fields C.A."/>
            <person name="Gocayne J.D."/>
            <person name="Scott J.D."/>
            <person name="Shirley R."/>
            <person name="Liu L.-I."/>
            <person name="Glodek A."/>
            <person name="Kelley J.M."/>
            <person name="Weidman J.F."/>
            <person name="Phillips C.A."/>
            <person name="Spriggs T."/>
            <person name="Hedblom E."/>
            <person name="Cotton M.D."/>
            <person name="Utterback T.R."/>
            <person name="Hanna M.C."/>
            <person name="Nguyen D.T."/>
            <person name="Saudek D.M."/>
            <person name="Brandon R.C."/>
            <person name="Fine L.D."/>
            <person name="Fritchman J.L."/>
            <person name="Fuhrmann J.L."/>
            <person name="Geoghagen N.S.M."/>
            <person name="Gnehm C.L."/>
            <person name="McDonald L.A."/>
            <person name="Small K.V."/>
            <person name="Fraser C.M."/>
            <person name="Smith H.O."/>
            <person name="Venter J.C."/>
        </authorList>
    </citation>
    <scope>NUCLEOTIDE SEQUENCE [LARGE SCALE GENOMIC DNA]</scope>
    <source>
        <strain>ATCC 51907 / DSM 11121 / KW20 / Rd</strain>
    </source>
</reference>
<feature type="signal peptide" evidence="1">
    <location>
        <begin position="1"/>
        <end position="29"/>
    </location>
</feature>
<feature type="chain" id="PRO_0000013960" description="Uncharacterized protein HI_0842">
    <location>
        <begin position="30"/>
        <end position="276"/>
    </location>
</feature>
<gene>
    <name type="ordered locus">HI_0842</name>
</gene>
<accession>P44058</accession>
<protein>
    <recommendedName>
        <fullName>Uncharacterized protein HI_0842</fullName>
    </recommendedName>
</protein>
<dbReference type="EMBL" id="L42023">
    <property type="protein sequence ID" value="AAC22510.1"/>
    <property type="molecule type" value="Genomic_DNA"/>
</dbReference>
<dbReference type="PIR" id="D64014">
    <property type="entry name" value="D64014"/>
</dbReference>
<dbReference type="SMR" id="P44058"/>
<dbReference type="STRING" id="71421.HI_0842"/>
<dbReference type="DNASU" id="949857"/>
<dbReference type="EnsemblBacteria" id="AAC22510">
    <property type="protein sequence ID" value="AAC22510"/>
    <property type="gene ID" value="HI_0842"/>
</dbReference>
<dbReference type="KEGG" id="hin:HI_0842"/>
<dbReference type="eggNOG" id="COG0402">
    <property type="taxonomic scope" value="Bacteria"/>
</dbReference>
<dbReference type="HOGENOM" id="CLU_031758_0_1_6"/>
<dbReference type="PhylomeDB" id="P44058"/>
<dbReference type="Proteomes" id="UP000000579">
    <property type="component" value="Chromosome"/>
</dbReference>
<dbReference type="Gene3D" id="3.20.20.140">
    <property type="entry name" value="Metal-dependent hydrolases"/>
    <property type="match status" value="1"/>
</dbReference>
<dbReference type="InterPro" id="IPR032466">
    <property type="entry name" value="Metal_Hydrolase"/>
</dbReference>
<dbReference type="InterPro" id="IPR052349">
    <property type="entry name" value="Metallo-hydrolase_Enzymes"/>
</dbReference>
<dbReference type="NCBIfam" id="NF005365">
    <property type="entry name" value="PRK06886.1"/>
    <property type="match status" value="1"/>
</dbReference>
<dbReference type="PANTHER" id="PTHR32027">
    <property type="entry name" value="CYTOSINE DEAMINASE"/>
    <property type="match status" value="1"/>
</dbReference>
<dbReference type="PANTHER" id="PTHR32027:SF0">
    <property type="entry name" value="CYTOSINE DEAMINASE"/>
    <property type="match status" value="1"/>
</dbReference>
<dbReference type="SUPFAM" id="SSF51556">
    <property type="entry name" value="Metallo-dependent hydrolases"/>
    <property type="match status" value="1"/>
</dbReference>
<keyword id="KW-1185">Reference proteome</keyword>
<keyword id="KW-0732">Signal</keyword>
<name>Y842_HAEIN</name>
<comment type="similarity">
    <text evidence="2">Belongs to the metallo-dependent hydrolases superfamily.</text>
</comment>